<dbReference type="EC" id="3.1.3.3" evidence="2"/>
<dbReference type="EMBL" id="AE017221">
    <property type="protein sequence ID" value="AAS82037.1"/>
    <property type="molecule type" value="Genomic_DNA"/>
</dbReference>
<dbReference type="RefSeq" id="WP_011174058.1">
    <property type="nucleotide sequence ID" value="NC_005835.1"/>
</dbReference>
<dbReference type="SMR" id="Q72H00"/>
<dbReference type="KEGG" id="tth:TT_C1695"/>
<dbReference type="eggNOG" id="COG1011">
    <property type="taxonomic scope" value="Bacteria"/>
</dbReference>
<dbReference type="HOGENOM" id="CLU_045011_8_0_0"/>
<dbReference type="OrthoDB" id="9797743at2"/>
<dbReference type="SABIO-RK" id="Q72H00"/>
<dbReference type="UniPathway" id="UPA00135">
    <property type="reaction ID" value="UER00198"/>
</dbReference>
<dbReference type="Proteomes" id="UP000000592">
    <property type="component" value="Chromosome"/>
</dbReference>
<dbReference type="GO" id="GO:0036424">
    <property type="term" value="F:L-phosphoserine phosphatase activity"/>
    <property type="evidence" value="ECO:0000314"/>
    <property type="project" value="UniProtKB"/>
</dbReference>
<dbReference type="GO" id="GO:0016311">
    <property type="term" value="P:dephosphorylation"/>
    <property type="evidence" value="ECO:0000314"/>
    <property type="project" value="UniProtKB"/>
</dbReference>
<dbReference type="GO" id="GO:0006564">
    <property type="term" value="P:L-serine biosynthetic process"/>
    <property type="evidence" value="ECO:0000315"/>
    <property type="project" value="UniProtKB"/>
</dbReference>
<dbReference type="Gene3D" id="1.20.120.1600">
    <property type="match status" value="1"/>
</dbReference>
<dbReference type="Gene3D" id="3.40.50.1000">
    <property type="entry name" value="HAD superfamily/HAD-like"/>
    <property type="match status" value="1"/>
</dbReference>
<dbReference type="HAMAP" id="MF_02240">
    <property type="entry name" value="PSP"/>
    <property type="match status" value="1"/>
</dbReference>
<dbReference type="InterPro" id="IPR051400">
    <property type="entry name" value="HAD-like_hydrolase"/>
</dbReference>
<dbReference type="InterPro" id="IPR036412">
    <property type="entry name" value="HAD-like_sf"/>
</dbReference>
<dbReference type="InterPro" id="IPR006439">
    <property type="entry name" value="HAD-SF_hydro_IA"/>
</dbReference>
<dbReference type="InterPro" id="IPR023214">
    <property type="entry name" value="HAD_sf"/>
</dbReference>
<dbReference type="InterPro" id="IPR044266">
    <property type="entry name" value="PSP_YsaA"/>
</dbReference>
<dbReference type="NCBIfam" id="TIGR01549">
    <property type="entry name" value="HAD-SF-IA-v1"/>
    <property type="match status" value="1"/>
</dbReference>
<dbReference type="NCBIfam" id="TIGR01509">
    <property type="entry name" value="HAD-SF-IA-v3"/>
    <property type="match status" value="1"/>
</dbReference>
<dbReference type="PANTHER" id="PTHR46470">
    <property type="entry name" value="N-ACYLNEURAMINATE-9-PHOSPHATASE"/>
    <property type="match status" value="1"/>
</dbReference>
<dbReference type="PANTHER" id="PTHR46470:SF3">
    <property type="entry name" value="N-ACYLNEURAMINATE-9-PHOSPHATASE"/>
    <property type="match status" value="1"/>
</dbReference>
<dbReference type="Pfam" id="PF00702">
    <property type="entry name" value="Hydrolase"/>
    <property type="match status" value="1"/>
</dbReference>
<dbReference type="SFLD" id="SFLDG01129">
    <property type="entry name" value="C1.5:_HAD__Beta-PGM__Phosphata"/>
    <property type="match status" value="1"/>
</dbReference>
<dbReference type="SFLD" id="SFLDS00003">
    <property type="entry name" value="Haloacid_Dehalogenase"/>
    <property type="match status" value="1"/>
</dbReference>
<dbReference type="SUPFAM" id="SSF56784">
    <property type="entry name" value="HAD-like"/>
    <property type="match status" value="1"/>
</dbReference>
<keyword id="KW-0028">Amino-acid biosynthesis</keyword>
<keyword id="KW-0170">Cobalt</keyword>
<keyword id="KW-0378">Hydrolase</keyword>
<keyword id="KW-0460">Magnesium</keyword>
<keyword id="KW-0718">Serine biosynthesis</keyword>
<gene>
    <name evidence="6" type="ordered locus">TT_C1695</name>
</gene>
<comment type="function">
    <text evidence="2">Catalyzes the last step of the phosphorylated serine biosynthetic pathway, i.e. dephosphorylation of O-phospho-L-serine to form L-serine. Is also able to dephosphorylate O-phospho-D-serine with similar efficiency. Displays a poor activity on L-phosphothreonine, and cannot use L-phosphotyrosine, pyridoxal phosphate, glucose 6-phosphate, or fructose 6-phosphate as substrates.</text>
</comment>
<comment type="catalytic activity">
    <reaction evidence="2">
        <text>O-phospho-L-serine + H2O = L-serine + phosphate</text>
        <dbReference type="Rhea" id="RHEA:21208"/>
        <dbReference type="ChEBI" id="CHEBI:15377"/>
        <dbReference type="ChEBI" id="CHEBI:33384"/>
        <dbReference type="ChEBI" id="CHEBI:43474"/>
        <dbReference type="ChEBI" id="CHEBI:57524"/>
        <dbReference type="EC" id="3.1.3.3"/>
    </reaction>
    <physiologicalReaction direction="left-to-right" evidence="2">
        <dbReference type="Rhea" id="RHEA:21209"/>
    </physiologicalReaction>
</comment>
<comment type="catalytic activity">
    <reaction evidence="2">
        <text>O-phospho-D-serine + H2O = D-serine + phosphate</text>
        <dbReference type="Rhea" id="RHEA:24873"/>
        <dbReference type="ChEBI" id="CHEBI:15377"/>
        <dbReference type="ChEBI" id="CHEBI:35247"/>
        <dbReference type="ChEBI" id="CHEBI:43474"/>
        <dbReference type="ChEBI" id="CHEBI:58680"/>
        <dbReference type="EC" id="3.1.3.3"/>
    </reaction>
    <physiologicalReaction direction="left-to-right" evidence="5">
        <dbReference type="Rhea" id="RHEA:24874"/>
    </physiologicalReaction>
</comment>
<comment type="cofactor">
    <cofactor evidence="2">
        <name>Mg(2+)</name>
        <dbReference type="ChEBI" id="CHEBI:18420"/>
    </cofactor>
    <cofactor evidence="2">
        <name>Co(2+)</name>
        <dbReference type="ChEBI" id="CHEBI:48828"/>
    </cofactor>
</comment>
<comment type="biophysicochemical properties">
    <kinetics>
        <KM evidence="2">0.25 mM for O-phospho-L-serine (at pH 7.0 and 70 degrees Celsius)</KM>
        <Vmax evidence="2">0.55 umol/min/mg enzyme (at pH 7.0 and 70 degrees Celsius) for the dephosphorylation of O-phospho-L-serine</Vmax>
        <text evidence="2">kcat is 1506 sec(-1) (at pH 7.0 and 70 degrees Celsius) for the dephosphorylation of O-phospho-L-serine.</text>
    </kinetics>
</comment>
<comment type="pathway">
    <text evidence="2">Amino-acid biosynthesis; L-serine biosynthesis; L-serine from 3-phospho-D-glycerate: step 3/3.</text>
</comment>
<comment type="subunit">
    <text evidence="2">Homodimer.</text>
</comment>
<comment type="disruption phenotype">
    <text evidence="2">Cells lacking this gene show serine auxotrophy when grown in a synthetic MP medium, in contrast to wild type. Addition of L-serine to the medium restores growth of the deletion mutant.</text>
</comment>
<comment type="similarity">
    <text evidence="1 4">Belongs to the HAD-like hydrolase superfamily.</text>
</comment>
<name>PSP_THET2</name>
<reference key="1">
    <citation type="journal article" date="2004" name="Nat. Biotechnol.">
        <title>The genome sequence of the extreme thermophile Thermus thermophilus.</title>
        <authorList>
            <person name="Henne A."/>
            <person name="Brueggemann H."/>
            <person name="Raasch C."/>
            <person name="Wiezer A."/>
            <person name="Hartsch T."/>
            <person name="Liesegang H."/>
            <person name="Johann A."/>
            <person name="Lienard T."/>
            <person name="Gohl O."/>
            <person name="Martinez-Arias R."/>
            <person name="Jacobi C."/>
            <person name="Starkuviene V."/>
            <person name="Schlenczeck S."/>
            <person name="Dencker S."/>
            <person name="Huber R."/>
            <person name="Klenk H.-P."/>
            <person name="Kramer W."/>
            <person name="Merkl R."/>
            <person name="Gottschalk G."/>
            <person name="Fritz H.-J."/>
        </authorList>
    </citation>
    <scope>NUCLEOTIDE SEQUENCE [LARGE SCALE GENOMIC DNA]</scope>
    <source>
        <strain>ATCC BAA-163 / DSM 7039 / HB27</strain>
    </source>
</reference>
<reference key="2">
    <citation type="journal article" date="2019" name="FEBS J.">
        <title>Discovery and analysis of a novel type of the serine biosynthetic enzyme phosphoserine phosphatase in Thermus thermophilus.</title>
        <authorList>
            <person name="Chiba Y."/>
            <person name="Yoshida A."/>
            <person name="Shimamura S."/>
            <person name="Kameya M."/>
            <person name="Tomita T."/>
            <person name="Nishiyama M."/>
            <person name="Takai K."/>
        </authorList>
    </citation>
    <scope>FUNCTION</scope>
    <scope>CATALYTIC ACTIVITY</scope>
    <scope>COFACTOR</scope>
    <scope>BIOPHYSICOCHEMICAL PROPERTIES</scope>
    <scope>SUBSTRATE SPECIFICITY</scope>
    <scope>DISRUPTION PHENOTYPE</scope>
    <scope>PATHWAY</scope>
    <scope>SUBUNIT</scope>
    <source>
        <strain>ATCC BAA-163 / DSM 7039 / HB27</strain>
    </source>
</reference>
<sequence length="249" mass="27436">MKLLLLDLDDTLLQDLPVSRAVLEDLGRKAGVEGFFARVKARAEALFREAPFYPWAEAIGHSALEALWARYSTPGLEALAAWAGPFRERVFREALEEAGGAPERARELAEAFFRERRRYPLYPEAEAFLAEARRRGLALALLTNGVPDLQREKLVGAGLAHHFSLVLISGEVGIGKPDPRLFRMALCAFGVAPEEAAMVGDNPQKDVRGARLAGVRAVWVDRGLRPEDPEASPDLRVGDLREVFLAEAL</sequence>
<protein>
    <recommendedName>
        <fullName evidence="3">Phosphoserine phosphatase</fullName>
        <shortName evidence="3">PSP</shortName>
        <ecNumber evidence="2">3.1.3.3</ecNumber>
    </recommendedName>
</protein>
<feature type="chain" id="PRO_0000448615" description="Phosphoserine phosphatase">
    <location>
        <begin position="1"/>
        <end position="249"/>
    </location>
</feature>
<proteinExistence type="evidence at protein level"/>
<evidence type="ECO:0000255" key="1">
    <source>
        <dbReference type="HAMAP-Rule" id="MF_02240"/>
    </source>
</evidence>
<evidence type="ECO:0000269" key="2">
    <source>
    </source>
</evidence>
<evidence type="ECO:0000303" key="3">
    <source>
    </source>
</evidence>
<evidence type="ECO:0000305" key="4"/>
<evidence type="ECO:0000305" key="5">
    <source>
    </source>
</evidence>
<evidence type="ECO:0000312" key="6">
    <source>
        <dbReference type="EMBL" id="AAS82037.1"/>
    </source>
</evidence>
<organism>
    <name type="scientific">Thermus thermophilus (strain ATCC BAA-163 / DSM 7039 / HB27)</name>
    <dbReference type="NCBI Taxonomy" id="262724"/>
    <lineage>
        <taxon>Bacteria</taxon>
        <taxon>Thermotogati</taxon>
        <taxon>Deinococcota</taxon>
        <taxon>Deinococci</taxon>
        <taxon>Thermales</taxon>
        <taxon>Thermaceae</taxon>
        <taxon>Thermus</taxon>
    </lineage>
</organism>
<accession>Q72H00</accession>